<sequence length="180" mass="20597">MAVIKVKKTGQVIEGEDNVRAFLNSQGVLYEHWDITKLPEHLRDKYVLTDEEKEEILATFKDEIEDLAARRGYKTWDIVALSDATPNLEELLKKFEQVHIHTEDEVRAITAGHGIFIIKGDKETGYFDVELEAGDVISVPEGNPHYFTLMDDRQVVAVRLFIDPSGWVAHPYEEKEEVNS</sequence>
<gene>
    <name evidence="1" type="primary">mtnD</name>
    <name type="ordered locus">GTNG_0844</name>
</gene>
<reference key="1">
    <citation type="journal article" date="2007" name="Proc. Natl. Acad. Sci. U.S.A.">
        <title>Genome and proteome of long-chain alkane degrading Geobacillus thermodenitrificans NG80-2 isolated from a deep-subsurface oil reservoir.</title>
        <authorList>
            <person name="Feng L."/>
            <person name="Wang W."/>
            <person name="Cheng J."/>
            <person name="Ren Y."/>
            <person name="Zhao G."/>
            <person name="Gao C."/>
            <person name="Tang Y."/>
            <person name="Liu X."/>
            <person name="Han W."/>
            <person name="Peng X."/>
            <person name="Liu R."/>
            <person name="Wang L."/>
        </authorList>
    </citation>
    <scope>NUCLEOTIDE SEQUENCE [LARGE SCALE GENOMIC DNA]</scope>
    <source>
        <strain>NG80-2</strain>
    </source>
</reference>
<name>MTND_GEOTN</name>
<keyword id="KW-0028">Amino-acid biosynthesis</keyword>
<keyword id="KW-0223">Dioxygenase</keyword>
<keyword id="KW-0408">Iron</keyword>
<keyword id="KW-0479">Metal-binding</keyword>
<keyword id="KW-0486">Methionine biosynthesis</keyword>
<keyword id="KW-0533">Nickel</keyword>
<keyword id="KW-0560">Oxidoreductase</keyword>
<comment type="function">
    <text evidence="1">Catalyzes 2 different reactions between oxygen and the acireductone 1,2-dihydroxy-3-keto-5-methylthiopentene (DHK-MTPene) depending upon the metal bound in the active site. Fe-containing acireductone dioxygenase (Fe-ARD) produces formate and 2-keto-4-methylthiobutyrate (KMTB), the alpha-ketoacid precursor of methionine in the methionine recycle pathway. Ni-containing acireductone dioxygenase (Ni-ARD) produces methylthiopropionate, carbon monoxide and formate, and does not lie on the methionine recycle pathway.</text>
</comment>
<comment type="catalytic activity">
    <reaction evidence="1">
        <text>1,2-dihydroxy-5-(methylsulfanyl)pent-1-en-3-one + O2 = 3-(methylsulfanyl)propanoate + CO + formate + 2 H(+)</text>
        <dbReference type="Rhea" id="RHEA:14161"/>
        <dbReference type="ChEBI" id="CHEBI:15378"/>
        <dbReference type="ChEBI" id="CHEBI:15379"/>
        <dbReference type="ChEBI" id="CHEBI:15740"/>
        <dbReference type="ChEBI" id="CHEBI:17245"/>
        <dbReference type="ChEBI" id="CHEBI:49016"/>
        <dbReference type="ChEBI" id="CHEBI:49252"/>
        <dbReference type="EC" id="1.13.11.53"/>
    </reaction>
</comment>
<comment type="catalytic activity">
    <reaction evidence="1">
        <text>1,2-dihydroxy-5-(methylsulfanyl)pent-1-en-3-one + O2 = 4-methylsulfanyl-2-oxobutanoate + formate + 2 H(+)</text>
        <dbReference type="Rhea" id="RHEA:24504"/>
        <dbReference type="ChEBI" id="CHEBI:15378"/>
        <dbReference type="ChEBI" id="CHEBI:15379"/>
        <dbReference type="ChEBI" id="CHEBI:15740"/>
        <dbReference type="ChEBI" id="CHEBI:16723"/>
        <dbReference type="ChEBI" id="CHEBI:49252"/>
        <dbReference type="EC" id="1.13.11.54"/>
    </reaction>
</comment>
<comment type="cofactor">
    <cofactor evidence="1">
        <name>Fe(2+)</name>
        <dbReference type="ChEBI" id="CHEBI:29033"/>
    </cofactor>
    <text evidence="1">Binds 1 Fe(2+) cation per monomer.</text>
</comment>
<comment type="cofactor">
    <cofactor evidence="1">
        <name>Ni(2+)</name>
        <dbReference type="ChEBI" id="CHEBI:49786"/>
    </cofactor>
    <text evidence="1">Binds 1 nickel ion per monomer.</text>
</comment>
<comment type="pathway">
    <text evidence="1">Amino-acid biosynthesis; L-methionine biosynthesis via salvage pathway; L-methionine from S-methyl-5-thio-alpha-D-ribose 1-phosphate: step 5/6.</text>
</comment>
<comment type="subunit">
    <text evidence="1">Monomer.</text>
</comment>
<comment type="similarity">
    <text evidence="1">Belongs to the acireductone dioxygenase (ARD) family.</text>
</comment>
<feature type="chain" id="PRO_0000359194" description="Acireductone dioxygenase">
    <location>
        <begin position="1"/>
        <end position="180"/>
    </location>
</feature>
<feature type="binding site" evidence="1">
    <location>
        <position position="99"/>
    </location>
    <ligand>
        <name>Fe(2+)</name>
        <dbReference type="ChEBI" id="CHEBI:29033"/>
    </ligand>
</feature>
<feature type="binding site" evidence="1">
    <location>
        <position position="99"/>
    </location>
    <ligand>
        <name>Ni(2+)</name>
        <dbReference type="ChEBI" id="CHEBI:49786"/>
    </ligand>
</feature>
<feature type="binding site" evidence="1">
    <location>
        <position position="101"/>
    </location>
    <ligand>
        <name>Fe(2+)</name>
        <dbReference type="ChEBI" id="CHEBI:29033"/>
    </ligand>
</feature>
<feature type="binding site" evidence="1">
    <location>
        <position position="101"/>
    </location>
    <ligand>
        <name>Ni(2+)</name>
        <dbReference type="ChEBI" id="CHEBI:49786"/>
    </ligand>
</feature>
<feature type="binding site" evidence="1">
    <location>
        <position position="105"/>
    </location>
    <ligand>
        <name>Fe(2+)</name>
        <dbReference type="ChEBI" id="CHEBI:29033"/>
    </ligand>
</feature>
<feature type="binding site" evidence="1">
    <location>
        <position position="105"/>
    </location>
    <ligand>
        <name>Ni(2+)</name>
        <dbReference type="ChEBI" id="CHEBI:49786"/>
    </ligand>
</feature>
<feature type="binding site" evidence="1">
    <location>
        <position position="145"/>
    </location>
    <ligand>
        <name>Fe(2+)</name>
        <dbReference type="ChEBI" id="CHEBI:29033"/>
    </ligand>
</feature>
<feature type="binding site" evidence="1">
    <location>
        <position position="145"/>
    </location>
    <ligand>
        <name>Ni(2+)</name>
        <dbReference type="ChEBI" id="CHEBI:49786"/>
    </ligand>
</feature>
<feature type="site" description="May play a role in transmitting local conformational changes" evidence="1">
    <location>
        <position position="104"/>
    </location>
</feature>
<feature type="site" description="Important to generate the dianion" evidence="1">
    <location>
        <position position="107"/>
    </location>
</feature>
<accession>A4ILL8</accession>
<evidence type="ECO:0000255" key="1">
    <source>
        <dbReference type="HAMAP-Rule" id="MF_01682"/>
    </source>
</evidence>
<organism>
    <name type="scientific">Geobacillus thermodenitrificans (strain NG80-2)</name>
    <dbReference type="NCBI Taxonomy" id="420246"/>
    <lineage>
        <taxon>Bacteria</taxon>
        <taxon>Bacillati</taxon>
        <taxon>Bacillota</taxon>
        <taxon>Bacilli</taxon>
        <taxon>Bacillales</taxon>
        <taxon>Anoxybacillaceae</taxon>
        <taxon>Geobacillus</taxon>
    </lineage>
</organism>
<dbReference type="EC" id="1.13.11.54" evidence="1"/>
<dbReference type="EC" id="1.13.11.53" evidence="1"/>
<dbReference type="EMBL" id="CP000557">
    <property type="protein sequence ID" value="ABO66222.1"/>
    <property type="molecule type" value="Genomic_DNA"/>
</dbReference>
<dbReference type="RefSeq" id="WP_008878834.1">
    <property type="nucleotide sequence ID" value="NC_009328.1"/>
</dbReference>
<dbReference type="SMR" id="A4ILL8"/>
<dbReference type="GeneID" id="87621560"/>
<dbReference type="KEGG" id="gtn:GTNG_0844"/>
<dbReference type="eggNOG" id="COG1791">
    <property type="taxonomic scope" value="Bacteria"/>
</dbReference>
<dbReference type="HOGENOM" id="CLU_125400_0_0_9"/>
<dbReference type="UniPathway" id="UPA00904">
    <property type="reaction ID" value="UER00878"/>
</dbReference>
<dbReference type="Proteomes" id="UP000001578">
    <property type="component" value="Chromosome"/>
</dbReference>
<dbReference type="GO" id="GO:0010308">
    <property type="term" value="F:acireductone dioxygenase (Ni2+-requiring) activity"/>
    <property type="evidence" value="ECO:0007669"/>
    <property type="project" value="UniProtKB-UniRule"/>
</dbReference>
<dbReference type="GO" id="GO:0010309">
    <property type="term" value="F:acireductone dioxygenase [iron(II)-requiring] activity"/>
    <property type="evidence" value="ECO:0007669"/>
    <property type="project" value="UniProtKB-UniRule"/>
</dbReference>
<dbReference type="GO" id="GO:0005506">
    <property type="term" value="F:iron ion binding"/>
    <property type="evidence" value="ECO:0007669"/>
    <property type="project" value="UniProtKB-UniRule"/>
</dbReference>
<dbReference type="GO" id="GO:0016151">
    <property type="term" value="F:nickel cation binding"/>
    <property type="evidence" value="ECO:0007669"/>
    <property type="project" value="UniProtKB-UniRule"/>
</dbReference>
<dbReference type="GO" id="GO:0019509">
    <property type="term" value="P:L-methionine salvage from methylthioadenosine"/>
    <property type="evidence" value="ECO:0007669"/>
    <property type="project" value="UniProtKB-UniRule"/>
</dbReference>
<dbReference type="GO" id="GO:0019284">
    <property type="term" value="P:L-methionine salvage from S-adenosylmethionine"/>
    <property type="evidence" value="ECO:0007669"/>
    <property type="project" value="InterPro"/>
</dbReference>
<dbReference type="CDD" id="cd02232">
    <property type="entry name" value="cupin_ARD"/>
    <property type="match status" value="1"/>
</dbReference>
<dbReference type="Gene3D" id="2.60.120.10">
    <property type="entry name" value="Jelly Rolls"/>
    <property type="match status" value="1"/>
</dbReference>
<dbReference type="HAMAP" id="MF_01682">
    <property type="entry name" value="Salvage_MtnD"/>
    <property type="match status" value="1"/>
</dbReference>
<dbReference type="InterPro" id="IPR004313">
    <property type="entry name" value="ARD"/>
</dbReference>
<dbReference type="InterPro" id="IPR023956">
    <property type="entry name" value="ARD_bac"/>
</dbReference>
<dbReference type="InterPro" id="IPR014710">
    <property type="entry name" value="RmlC-like_jellyroll"/>
</dbReference>
<dbReference type="InterPro" id="IPR011051">
    <property type="entry name" value="RmlC_Cupin_sf"/>
</dbReference>
<dbReference type="PANTHER" id="PTHR23418">
    <property type="entry name" value="ACIREDUCTONE DIOXYGENASE"/>
    <property type="match status" value="1"/>
</dbReference>
<dbReference type="PANTHER" id="PTHR23418:SF0">
    <property type="entry name" value="ACIREDUCTONE DIOXYGENASE"/>
    <property type="match status" value="1"/>
</dbReference>
<dbReference type="Pfam" id="PF03079">
    <property type="entry name" value="ARD"/>
    <property type="match status" value="1"/>
</dbReference>
<dbReference type="SUPFAM" id="SSF51182">
    <property type="entry name" value="RmlC-like cupins"/>
    <property type="match status" value="1"/>
</dbReference>
<protein>
    <recommendedName>
        <fullName evidence="1">Acireductone dioxygenase</fullName>
    </recommendedName>
    <alternativeName>
        <fullName evidence="1">1,2-dihydroxy-3-keto-5-methylthiopentene dioxygenase</fullName>
        <shortName evidence="1">DHK-MTPene dioxygenase</shortName>
    </alternativeName>
    <alternativeName>
        <fullName evidence="1">Acireductone dioxygenase (Fe(2+)-requiring)</fullName>
        <shortName evidence="1">ARD'</shortName>
        <shortName evidence="1">Fe-ARD</shortName>
        <ecNumber evidence="1">1.13.11.54</ecNumber>
    </alternativeName>
    <alternativeName>
        <fullName evidence="1">Acireductone dioxygenase (Ni(2+)-requiring)</fullName>
        <shortName evidence="1">ARD</shortName>
        <shortName evidence="1">Ni-ARD</shortName>
        <ecNumber evidence="1">1.13.11.53</ecNumber>
    </alternativeName>
</protein>
<proteinExistence type="inferred from homology"/>